<protein>
    <recommendedName>
        <fullName evidence="1">Carnitinyl-CoA dehydratase</fullName>
        <ecNumber evidence="1">4.2.1.149</ecNumber>
    </recommendedName>
    <alternativeName>
        <fullName evidence="1">Crotonobetainyl-CoA hydratase</fullName>
    </alternativeName>
</protein>
<name>CAID_SALPA</name>
<comment type="function">
    <text evidence="1">Catalyzes the reversible dehydration of L-carnitinyl-CoA to crotonobetainyl-CoA.</text>
</comment>
<comment type="catalytic activity">
    <reaction evidence="1">
        <text>(R)-carnitinyl-CoA = crotonobetainyl-CoA + H2O</text>
        <dbReference type="Rhea" id="RHEA:28338"/>
        <dbReference type="ChEBI" id="CHEBI:15377"/>
        <dbReference type="ChEBI" id="CHEBI:60932"/>
        <dbReference type="ChEBI" id="CHEBI:60933"/>
        <dbReference type="EC" id="4.2.1.149"/>
    </reaction>
</comment>
<comment type="pathway">
    <text evidence="1">Amine and polyamine metabolism; carnitine metabolism.</text>
</comment>
<comment type="similarity">
    <text evidence="1">Belongs to the enoyl-CoA hydratase/isomerase family.</text>
</comment>
<dbReference type="EC" id="4.2.1.149" evidence="1"/>
<dbReference type="EMBL" id="CP000026">
    <property type="protein sequence ID" value="AAV76105.1"/>
    <property type="molecule type" value="Genomic_DNA"/>
</dbReference>
<dbReference type="RefSeq" id="WP_000004376.1">
    <property type="nucleotide sequence ID" value="NC_006511.1"/>
</dbReference>
<dbReference type="SMR" id="Q5PIL1"/>
<dbReference type="KEGG" id="spt:SPA0071"/>
<dbReference type="HOGENOM" id="CLU_009834_7_6_6"/>
<dbReference type="UniPathway" id="UPA00117"/>
<dbReference type="Proteomes" id="UP000008185">
    <property type="component" value="Chromosome"/>
</dbReference>
<dbReference type="GO" id="GO:0016836">
    <property type="term" value="F:hydro-lyase activity"/>
    <property type="evidence" value="ECO:0007669"/>
    <property type="project" value="UniProtKB-UniRule"/>
</dbReference>
<dbReference type="GO" id="GO:0008735">
    <property type="term" value="F:L-carnitine CoA-transferase activity"/>
    <property type="evidence" value="ECO:0007669"/>
    <property type="project" value="RHEA"/>
</dbReference>
<dbReference type="GO" id="GO:0009437">
    <property type="term" value="P:carnitine metabolic process"/>
    <property type="evidence" value="ECO:0007669"/>
    <property type="project" value="UniProtKB-UniRule"/>
</dbReference>
<dbReference type="GO" id="GO:0006635">
    <property type="term" value="P:fatty acid beta-oxidation"/>
    <property type="evidence" value="ECO:0007669"/>
    <property type="project" value="TreeGrafter"/>
</dbReference>
<dbReference type="CDD" id="cd06558">
    <property type="entry name" value="crotonase-like"/>
    <property type="match status" value="1"/>
</dbReference>
<dbReference type="FunFam" id="1.10.12.10:FF:000005">
    <property type="entry name" value="Carnitinyl-CoA dehydratase"/>
    <property type="match status" value="1"/>
</dbReference>
<dbReference type="FunFam" id="3.90.226.10:FF:000009">
    <property type="entry name" value="Carnitinyl-CoA dehydratase"/>
    <property type="match status" value="1"/>
</dbReference>
<dbReference type="Gene3D" id="3.90.226.10">
    <property type="entry name" value="2-enoyl-CoA Hydratase, Chain A, domain 1"/>
    <property type="match status" value="1"/>
</dbReference>
<dbReference type="Gene3D" id="1.10.12.10">
    <property type="entry name" value="Lyase 2-enoyl-coa Hydratase, Chain A, domain 2"/>
    <property type="match status" value="1"/>
</dbReference>
<dbReference type="HAMAP" id="MF_01051">
    <property type="entry name" value="CaiD"/>
    <property type="match status" value="1"/>
</dbReference>
<dbReference type="InterPro" id="IPR022852">
    <property type="entry name" value="Carnitinyl_CoA_dehydratase"/>
</dbReference>
<dbReference type="InterPro" id="IPR029045">
    <property type="entry name" value="ClpP/crotonase-like_dom_sf"/>
</dbReference>
<dbReference type="InterPro" id="IPR018376">
    <property type="entry name" value="Enoyl-CoA_hyd/isom_CS"/>
</dbReference>
<dbReference type="InterPro" id="IPR001753">
    <property type="entry name" value="Enoyl-CoA_hydra/iso"/>
</dbReference>
<dbReference type="InterPro" id="IPR014748">
    <property type="entry name" value="Enoyl-CoA_hydra_C"/>
</dbReference>
<dbReference type="NCBIfam" id="NF002936">
    <property type="entry name" value="PRK03580.1"/>
    <property type="match status" value="1"/>
</dbReference>
<dbReference type="PANTHER" id="PTHR11941:SF54">
    <property type="entry name" value="ENOYL-COA HYDRATASE, MITOCHONDRIAL"/>
    <property type="match status" value="1"/>
</dbReference>
<dbReference type="PANTHER" id="PTHR11941">
    <property type="entry name" value="ENOYL-COA HYDRATASE-RELATED"/>
    <property type="match status" value="1"/>
</dbReference>
<dbReference type="Pfam" id="PF00378">
    <property type="entry name" value="ECH_1"/>
    <property type="match status" value="1"/>
</dbReference>
<dbReference type="SUPFAM" id="SSF52096">
    <property type="entry name" value="ClpP/crotonase"/>
    <property type="match status" value="1"/>
</dbReference>
<dbReference type="PROSITE" id="PS00166">
    <property type="entry name" value="ENOYL_COA_HYDRATASE"/>
    <property type="match status" value="1"/>
</dbReference>
<gene>
    <name evidence="1" type="primary">caiD</name>
    <name type="ordered locus">SPA0071</name>
</gene>
<proteinExistence type="inferred from homology"/>
<accession>Q5PIL1</accession>
<organism>
    <name type="scientific">Salmonella paratyphi A (strain ATCC 9150 / SARB42)</name>
    <dbReference type="NCBI Taxonomy" id="295319"/>
    <lineage>
        <taxon>Bacteria</taxon>
        <taxon>Pseudomonadati</taxon>
        <taxon>Pseudomonadota</taxon>
        <taxon>Gammaproteobacteria</taxon>
        <taxon>Enterobacterales</taxon>
        <taxon>Enterobacteriaceae</taxon>
        <taxon>Salmonella</taxon>
    </lineage>
</organism>
<keyword id="KW-0456">Lyase</keyword>
<evidence type="ECO:0000255" key="1">
    <source>
        <dbReference type="HAMAP-Rule" id="MF_01051"/>
    </source>
</evidence>
<reference key="1">
    <citation type="journal article" date="2004" name="Nat. Genet.">
        <title>Comparison of genome degradation in Paratyphi A and Typhi, human-restricted serovars of Salmonella enterica that cause typhoid.</title>
        <authorList>
            <person name="McClelland M."/>
            <person name="Sanderson K.E."/>
            <person name="Clifton S.W."/>
            <person name="Latreille P."/>
            <person name="Porwollik S."/>
            <person name="Sabo A."/>
            <person name="Meyer R."/>
            <person name="Bieri T."/>
            <person name="Ozersky P."/>
            <person name="McLellan M."/>
            <person name="Harkins C.R."/>
            <person name="Wang C."/>
            <person name="Nguyen C."/>
            <person name="Berghoff A."/>
            <person name="Elliott G."/>
            <person name="Kohlberg S."/>
            <person name="Strong C."/>
            <person name="Du F."/>
            <person name="Carter J."/>
            <person name="Kremizki C."/>
            <person name="Layman D."/>
            <person name="Leonard S."/>
            <person name="Sun H."/>
            <person name="Fulton L."/>
            <person name="Nash W."/>
            <person name="Miner T."/>
            <person name="Minx P."/>
            <person name="Delehaunty K."/>
            <person name="Fronick C."/>
            <person name="Magrini V."/>
            <person name="Nhan M."/>
            <person name="Warren W."/>
            <person name="Florea L."/>
            <person name="Spieth J."/>
            <person name="Wilson R.K."/>
        </authorList>
    </citation>
    <scope>NUCLEOTIDE SEQUENCE [LARGE SCALE GENOMIC DNA]</scope>
    <source>
        <strain>ATCC 9150 / SARB42</strain>
    </source>
</reference>
<sequence length="261" mass="28106">MSESLHLTRNGPILEITLDRPKANAIDAKTSFAMGEAFLNFRDDPELRVAIITGGGEKFFSAGWDLKAAAEGEAPDADFGPGGFAGLTEIFDLDKPVIAAVNGYAFGGGFELALAADFIVCAENASFALPEAKLGIVPDSGGVLRLPKLLPPAIVNEMVMTGRRMSAEEALRWGIVNRVVSQSELMDSARELAQQLVNSAPLAIAALKEIYRATSEMPVEEGYRYIRSGVLKHYPSVLHSEDALEGPQAFAEKRDPVWKGR</sequence>
<feature type="chain" id="PRO_1000064343" description="Carnitinyl-CoA dehydratase">
    <location>
        <begin position="1"/>
        <end position="261"/>
    </location>
</feature>
<feature type="active site" description="Nucleophile" evidence="1">
    <location>
        <position position="111"/>
    </location>
</feature>
<feature type="active site" description="Proton acceptor" evidence="1">
    <location>
        <position position="131"/>
    </location>
</feature>